<gene>
    <name evidence="1" type="primary">parC</name>
    <name type="ordered locus">M6_Spy0729</name>
</gene>
<proteinExistence type="inferred from homology"/>
<feature type="chain" id="PRO_0000145421" description="DNA topoisomerase 4 subunit A">
    <location>
        <begin position="1"/>
        <end position="819"/>
    </location>
</feature>
<feature type="domain" description="Topo IIA-type catalytic" evidence="2">
    <location>
        <begin position="30"/>
        <end position="496"/>
    </location>
</feature>
<feature type="active site" description="O-(5'-phospho-DNA)-tyrosine intermediate" evidence="1">
    <location>
        <position position="118"/>
    </location>
</feature>
<feature type="site" description="Interaction with DNA" evidence="1">
    <location>
        <position position="38"/>
    </location>
</feature>
<feature type="site" description="Interaction with DNA" evidence="1">
    <location>
        <position position="74"/>
    </location>
</feature>
<feature type="site" description="Interaction with DNA" evidence="1">
    <location>
        <position position="76"/>
    </location>
</feature>
<feature type="site" description="Interaction with DNA" evidence="1">
    <location>
        <position position="87"/>
    </location>
</feature>
<feature type="site" description="Interaction with DNA" evidence="1">
    <location>
        <position position="93"/>
    </location>
</feature>
<feature type="site" description="Transition state stabilizer" evidence="1">
    <location>
        <position position="117"/>
    </location>
</feature>
<name>PARC_STRP6</name>
<dbReference type="EC" id="5.6.2.2" evidence="1"/>
<dbReference type="EMBL" id="CP000003">
    <property type="protein sequence ID" value="AAT86864.1"/>
    <property type="status" value="ALT_INIT"/>
    <property type="molecule type" value="Genomic_DNA"/>
</dbReference>
<dbReference type="RefSeq" id="WP_021340535.1">
    <property type="nucleotide sequence ID" value="NC_006086.1"/>
</dbReference>
<dbReference type="SMR" id="Q5XCJ9"/>
<dbReference type="KEGG" id="spa:M6_Spy0729"/>
<dbReference type="HOGENOM" id="CLU_002977_6_1_9"/>
<dbReference type="Proteomes" id="UP000001167">
    <property type="component" value="Chromosome"/>
</dbReference>
<dbReference type="GO" id="GO:0005694">
    <property type="term" value="C:chromosome"/>
    <property type="evidence" value="ECO:0007669"/>
    <property type="project" value="InterPro"/>
</dbReference>
<dbReference type="GO" id="GO:0005737">
    <property type="term" value="C:cytoplasm"/>
    <property type="evidence" value="ECO:0007669"/>
    <property type="project" value="TreeGrafter"/>
</dbReference>
<dbReference type="GO" id="GO:0009330">
    <property type="term" value="C:DNA topoisomerase type II (double strand cut, ATP-hydrolyzing) complex"/>
    <property type="evidence" value="ECO:0007669"/>
    <property type="project" value="TreeGrafter"/>
</dbReference>
<dbReference type="GO" id="GO:0019897">
    <property type="term" value="C:extrinsic component of plasma membrane"/>
    <property type="evidence" value="ECO:0007669"/>
    <property type="project" value="UniProtKB-UniRule"/>
</dbReference>
<dbReference type="GO" id="GO:0005524">
    <property type="term" value="F:ATP binding"/>
    <property type="evidence" value="ECO:0007669"/>
    <property type="project" value="InterPro"/>
</dbReference>
<dbReference type="GO" id="GO:0003677">
    <property type="term" value="F:DNA binding"/>
    <property type="evidence" value="ECO:0007669"/>
    <property type="project" value="UniProtKB-UniRule"/>
</dbReference>
<dbReference type="GO" id="GO:0034335">
    <property type="term" value="F:DNA negative supercoiling activity"/>
    <property type="evidence" value="ECO:0007669"/>
    <property type="project" value="UniProtKB-ARBA"/>
</dbReference>
<dbReference type="GO" id="GO:0007059">
    <property type="term" value="P:chromosome segregation"/>
    <property type="evidence" value="ECO:0007669"/>
    <property type="project" value="UniProtKB-UniRule"/>
</dbReference>
<dbReference type="GO" id="GO:0006265">
    <property type="term" value="P:DNA topological change"/>
    <property type="evidence" value="ECO:0007669"/>
    <property type="project" value="UniProtKB-UniRule"/>
</dbReference>
<dbReference type="CDD" id="cd00187">
    <property type="entry name" value="TOP4c"/>
    <property type="match status" value="1"/>
</dbReference>
<dbReference type="FunFam" id="1.10.268.10:FF:000001">
    <property type="entry name" value="DNA gyrase subunit A"/>
    <property type="match status" value="1"/>
</dbReference>
<dbReference type="FunFam" id="3.30.1360.40:FF:000002">
    <property type="entry name" value="DNA gyrase subunit A"/>
    <property type="match status" value="1"/>
</dbReference>
<dbReference type="FunFam" id="3.90.199.10:FF:000001">
    <property type="entry name" value="DNA gyrase subunit A"/>
    <property type="match status" value="1"/>
</dbReference>
<dbReference type="FunFam" id="2.120.10.90:FF:000005">
    <property type="entry name" value="DNA topoisomerase 4 subunit A"/>
    <property type="match status" value="1"/>
</dbReference>
<dbReference type="Gene3D" id="3.30.1360.40">
    <property type="match status" value="1"/>
</dbReference>
<dbReference type="Gene3D" id="2.120.10.90">
    <property type="entry name" value="DNA gyrase/topoisomerase IV, subunit A, C-terminal"/>
    <property type="match status" value="1"/>
</dbReference>
<dbReference type="Gene3D" id="3.90.199.10">
    <property type="entry name" value="Topoisomerase II, domain 5"/>
    <property type="match status" value="1"/>
</dbReference>
<dbReference type="Gene3D" id="1.10.268.10">
    <property type="entry name" value="Topoisomerase, domain 3"/>
    <property type="match status" value="1"/>
</dbReference>
<dbReference type="HAMAP" id="MF_00937">
    <property type="entry name" value="ParC_type2"/>
    <property type="match status" value="1"/>
</dbReference>
<dbReference type="InterPro" id="IPR006691">
    <property type="entry name" value="GyrA/parC_rep"/>
</dbReference>
<dbReference type="InterPro" id="IPR035516">
    <property type="entry name" value="Gyrase/topoIV_suA_C"/>
</dbReference>
<dbReference type="InterPro" id="IPR013760">
    <property type="entry name" value="Topo_IIA-like_dom_sf"/>
</dbReference>
<dbReference type="InterPro" id="IPR013758">
    <property type="entry name" value="Topo_IIA_A/C_ab"/>
</dbReference>
<dbReference type="InterPro" id="IPR013757">
    <property type="entry name" value="Topo_IIA_A_a_sf"/>
</dbReference>
<dbReference type="InterPro" id="IPR002205">
    <property type="entry name" value="Topo_IIA_dom_A"/>
</dbReference>
<dbReference type="InterPro" id="IPR005741">
    <property type="entry name" value="TopoIV_A_Gpos"/>
</dbReference>
<dbReference type="InterPro" id="IPR050220">
    <property type="entry name" value="Type_II_DNA_Topoisomerases"/>
</dbReference>
<dbReference type="NCBIfam" id="TIGR01061">
    <property type="entry name" value="parC_Gpos"/>
    <property type="match status" value="1"/>
</dbReference>
<dbReference type="NCBIfam" id="NF004044">
    <property type="entry name" value="PRK05561.1"/>
    <property type="match status" value="1"/>
</dbReference>
<dbReference type="PANTHER" id="PTHR43493">
    <property type="entry name" value="DNA GYRASE/TOPOISOMERASE SUBUNIT A"/>
    <property type="match status" value="1"/>
</dbReference>
<dbReference type="PANTHER" id="PTHR43493:SF9">
    <property type="entry name" value="DNA TOPOISOMERASE 4 SUBUNIT A"/>
    <property type="match status" value="1"/>
</dbReference>
<dbReference type="Pfam" id="PF03989">
    <property type="entry name" value="DNA_gyraseA_C"/>
    <property type="match status" value="4"/>
</dbReference>
<dbReference type="Pfam" id="PF00521">
    <property type="entry name" value="DNA_topoisoIV"/>
    <property type="match status" value="1"/>
</dbReference>
<dbReference type="SMART" id="SM00434">
    <property type="entry name" value="TOP4c"/>
    <property type="match status" value="1"/>
</dbReference>
<dbReference type="SUPFAM" id="SSF101904">
    <property type="entry name" value="GyrA/ParC C-terminal domain-like"/>
    <property type="match status" value="1"/>
</dbReference>
<dbReference type="SUPFAM" id="SSF56719">
    <property type="entry name" value="Type II DNA topoisomerase"/>
    <property type="match status" value="1"/>
</dbReference>
<dbReference type="PROSITE" id="PS52040">
    <property type="entry name" value="TOPO_IIA"/>
    <property type="match status" value="1"/>
</dbReference>
<sequence length="819" mass="92420">MSNIQNMSLEDIMGERFGRYSKYIIQERALPDIRDGLKPVQRRILYSMNKDGNTFEKGYRKSAKSVGNIMGNFHPHGDASIYDAMVRMSQDWKNREILVEMHGNNGSMDGDPPAAMRYTEARLSEIAGYLLQDIEKNTVSFAWNFDDTEKEPTVLPAAFPNLLVNGSSGISAGYATDIPPHNLSEVIDAVVYMIDHPKASLEKLMEFLPGPDFPTGGIIQGADEIKKAYETGKGRVVVRSRTEIEELKGGKQQIIVTEIPYEVNKAVLVKKIDDVRVNNKVPGIVEVRDESDRTGLRIAIELKKEADSQTILNYLLKYTDLQVNYNFNMVAIDHFTPRQVGLQKILSSYISHRKDIIIERSKFDKAKAEKRLHIVEGLIRVLSILDEIIALIRSSDNKADAKENLKVSYDFSEEQAEAIVTLQLYRLTNTDIVTLQNEENDLRDLITTLSAIIGDEATMYNVMKRELREVKKKFANPRLSELQAESQIIEIDTASLIAEEETFVSVTRGGYLKRTSPRSFNASSLEEVGKRDDDELIFVKQAKTTEHLLLFTTLGNVIYRPIHELTDLRWKDIGEHLSQTISNFATEEEILYADIVTSFDQGLYVAVTQNGFIKRFDRKELSPWRTYKSKSTKYVKLKDDKDRVVTLSPVIMEDLLLVTKNGYALRFSSQEVPIQGLKSAGVKGINLKNDDSLASAFAVTSNSFFVLTQRGSLKRMAVDDIPQTSRANRGLLVLRELKTKPHRVFLAGGVQSDASAEQFDLFTDIPEEETNQQMLEVISKTGQTYEIALETLSLSERTSNGSFISDTISDQEVLVARTR</sequence>
<reference key="1">
    <citation type="journal article" date="2004" name="J. Infect. Dis.">
        <title>Progress toward characterization of the group A Streptococcus metagenome: complete genome sequence of a macrolide-resistant serotype M6 strain.</title>
        <authorList>
            <person name="Banks D.J."/>
            <person name="Porcella S.F."/>
            <person name="Barbian K.D."/>
            <person name="Beres S.B."/>
            <person name="Philips L.E."/>
            <person name="Voyich J.M."/>
            <person name="DeLeo F.R."/>
            <person name="Martin J.M."/>
            <person name="Somerville G.A."/>
            <person name="Musser J.M."/>
        </authorList>
    </citation>
    <scope>NUCLEOTIDE SEQUENCE [LARGE SCALE GENOMIC DNA]</scope>
    <source>
        <strain>ATCC BAA-946 / MGAS10394</strain>
    </source>
</reference>
<comment type="function">
    <text evidence="1">Topoisomerase IV is essential for chromosome segregation. It relaxes supercoiled DNA. Performs the decatenation events required during the replication of a circular DNA molecule.</text>
</comment>
<comment type="catalytic activity">
    <reaction evidence="1">
        <text>ATP-dependent breakage, passage and rejoining of double-stranded DNA.</text>
        <dbReference type="EC" id="5.6.2.2"/>
    </reaction>
</comment>
<comment type="subunit">
    <text evidence="1">Heterotetramer composed of ParC and ParE.</text>
</comment>
<comment type="subcellular location">
    <subcellularLocation>
        <location evidence="1">Cell membrane</location>
        <topology evidence="1">Peripheral membrane protein</topology>
    </subcellularLocation>
</comment>
<comment type="similarity">
    <text evidence="1">Belongs to the type II topoisomerase GyrA/ParC subunit family. ParC type 2 subfamily.</text>
</comment>
<comment type="sequence caution" evidence="3">
    <conflict type="erroneous initiation">
        <sequence resource="EMBL-CDS" id="AAT86864"/>
    </conflict>
    <text>Extended N-terminus.</text>
</comment>
<keyword id="KW-1003">Cell membrane</keyword>
<keyword id="KW-0238">DNA-binding</keyword>
<keyword id="KW-0413">Isomerase</keyword>
<keyword id="KW-0472">Membrane</keyword>
<keyword id="KW-0799">Topoisomerase</keyword>
<accession>Q5XCJ9</accession>
<evidence type="ECO:0000255" key="1">
    <source>
        <dbReference type="HAMAP-Rule" id="MF_00937"/>
    </source>
</evidence>
<evidence type="ECO:0000255" key="2">
    <source>
        <dbReference type="PROSITE-ProRule" id="PRU01384"/>
    </source>
</evidence>
<evidence type="ECO:0000305" key="3"/>
<organism>
    <name type="scientific">Streptococcus pyogenes serotype M6 (strain ATCC BAA-946 / MGAS10394)</name>
    <dbReference type="NCBI Taxonomy" id="286636"/>
    <lineage>
        <taxon>Bacteria</taxon>
        <taxon>Bacillati</taxon>
        <taxon>Bacillota</taxon>
        <taxon>Bacilli</taxon>
        <taxon>Lactobacillales</taxon>
        <taxon>Streptococcaceae</taxon>
        <taxon>Streptococcus</taxon>
    </lineage>
</organism>
<protein>
    <recommendedName>
        <fullName evidence="1">DNA topoisomerase 4 subunit A</fullName>
        <ecNumber evidence="1">5.6.2.2</ecNumber>
    </recommendedName>
    <alternativeName>
        <fullName evidence="1">Topoisomerase IV subunit A</fullName>
    </alternativeName>
</protein>